<reference key="1">
    <citation type="journal article" date="2009" name="Appl. Environ. Microbiol.">
        <title>Three genomes from the phylum Acidobacteria provide insight into the lifestyles of these microorganisms in soils.</title>
        <authorList>
            <person name="Ward N.L."/>
            <person name="Challacombe J.F."/>
            <person name="Janssen P.H."/>
            <person name="Henrissat B."/>
            <person name="Coutinho P.M."/>
            <person name="Wu M."/>
            <person name="Xie G."/>
            <person name="Haft D.H."/>
            <person name="Sait M."/>
            <person name="Badger J."/>
            <person name="Barabote R.D."/>
            <person name="Bradley B."/>
            <person name="Brettin T.S."/>
            <person name="Brinkac L.M."/>
            <person name="Bruce D."/>
            <person name="Creasy T."/>
            <person name="Daugherty S.C."/>
            <person name="Davidsen T.M."/>
            <person name="DeBoy R.T."/>
            <person name="Detter J.C."/>
            <person name="Dodson R.J."/>
            <person name="Durkin A.S."/>
            <person name="Ganapathy A."/>
            <person name="Gwinn-Giglio M."/>
            <person name="Han C.S."/>
            <person name="Khouri H."/>
            <person name="Kiss H."/>
            <person name="Kothari S.P."/>
            <person name="Madupu R."/>
            <person name="Nelson K.E."/>
            <person name="Nelson W.C."/>
            <person name="Paulsen I."/>
            <person name="Penn K."/>
            <person name="Ren Q."/>
            <person name="Rosovitz M.J."/>
            <person name="Selengut J.D."/>
            <person name="Shrivastava S."/>
            <person name="Sullivan S.A."/>
            <person name="Tapia R."/>
            <person name="Thompson L.S."/>
            <person name="Watkins K.L."/>
            <person name="Yang Q."/>
            <person name="Yu C."/>
            <person name="Zafar N."/>
            <person name="Zhou L."/>
            <person name="Kuske C.R."/>
        </authorList>
    </citation>
    <scope>NUCLEOTIDE SEQUENCE [LARGE SCALE GENOMIC DNA]</scope>
    <source>
        <strain>Ellin6076</strain>
    </source>
</reference>
<dbReference type="EMBL" id="CP000473">
    <property type="protein sequence ID" value="ABJ88392.1"/>
    <property type="molecule type" value="Genomic_DNA"/>
</dbReference>
<dbReference type="SMR" id="Q01PM8"/>
<dbReference type="FunCoup" id="Q01PM8">
    <property type="interactions" value="783"/>
</dbReference>
<dbReference type="STRING" id="234267.Acid_7484"/>
<dbReference type="KEGG" id="sus:Acid_7484"/>
<dbReference type="eggNOG" id="COG0443">
    <property type="taxonomic scope" value="Bacteria"/>
</dbReference>
<dbReference type="HOGENOM" id="CLU_005965_2_1_0"/>
<dbReference type="InParanoid" id="Q01PM8"/>
<dbReference type="OrthoDB" id="9766019at2"/>
<dbReference type="GO" id="GO:0005524">
    <property type="term" value="F:ATP binding"/>
    <property type="evidence" value="ECO:0007669"/>
    <property type="project" value="UniProtKB-UniRule"/>
</dbReference>
<dbReference type="GO" id="GO:0140662">
    <property type="term" value="F:ATP-dependent protein folding chaperone"/>
    <property type="evidence" value="ECO:0007669"/>
    <property type="project" value="InterPro"/>
</dbReference>
<dbReference type="GO" id="GO:0051082">
    <property type="term" value="F:unfolded protein binding"/>
    <property type="evidence" value="ECO:0007669"/>
    <property type="project" value="InterPro"/>
</dbReference>
<dbReference type="CDD" id="cd10234">
    <property type="entry name" value="ASKHA_NBD_HSP70_DnaK-like"/>
    <property type="match status" value="1"/>
</dbReference>
<dbReference type="FunFam" id="2.60.34.10:FF:000014">
    <property type="entry name" value="Chaperone protein DnaK HSP70"/>
    <property type="match status" value="1"/>
</dbReference>
<dbReference type="FunFam" id="1.20.1270.10:FF:000001">
    <property type="entry name" value="Molecular chaperone DnaK"/>
    <property type="match status" value="1"/>
</dbReference>
<dbReference type="FunFam" id="3.30.420.40:FF:000004">
    <property type="entry name" value="Molecular chaperone DnaK"/>
    <property type="match status" value="1"/>
</dbReference>
<dbReference type="FunFam" id="3.90.640.10:FF:000003">
    <property type="entry name" value="Molecular chaperone DnaK"/>
    <property type="match status" value="1"/>
</dbReference>
<dbReference type="Gene3D" id="1.20.1270.10">
    <property type="match status" value="1"/>
</dbReference>
<dbReference type="Gene3D" id="3.30.420.40">
    <property type="match status" value="2"/>
</dbReference>
<dbReference type="Gene3D" id="3.90.640.10">
    <property type="entry name" value="Actin, Chain A, domain 4"/>
    <property type="match status" value="1"/>
</dbReference>
<dbReference type="Gene3D" id="2.60.34.10">
    <property type="entry name" value="Substrate Binding Domain Of DNAk, Chain A, domain 1"/>
    <property type="match status" value="1"/>
</dbReference>
<dbReference type="HAMAP" id="MF_00332">
    <property type="entry name" value="DnaK"/>
    <property type="match status" value="1"/>
</dbReference>
<dbReference type="InterPro" id="IPR043129">
    <property type="entry name" value="ATPase_NBD"/>
</dbReference>
<dbReference type="InterPro" id="IPR012725">
    <property type="entry name" value="Chaperone_DnaK"/>
</dbReference>
<dbReference type="InterPro" id="IPR018181">
    <property type="entry name" value="Heat_shock_70_CS"/>
</dbReference>
<dbReference type="InterPro" id="IPR029048">
    <property type="entry name" value="HSP70_C_sf"/>
</dbReference>
<dbReference type="InterPro" id="IPR029047">
    <property type="entry name" value="HSP70_peptide-bd_sf"/>
</dbReference>
<dbReference type="InterPro" id="IPR013126">
    <property type="entry name" value="Hsp_70_fam"/>
</dbReference>
<dbReference type="NCBIfam" id="NF001413">
    <property type="entry name" value="PRK00290.1"/>
    <property type="match status" value="1"/>
</dbReference>
<dbReference type="NCBIfam" id="NF003520">
    <property type="entry name" value="PRK05183.1"/>
    <property type="match status" value="1"/>
</dbReference>
<dbReference type="NCBIfam" id="TIGR02350">
    <property type="entry name" value="prok_dnaK"/>
    <property type="match status" value="1"/>
</dbReference>
<dbReference type="PANTHER" id="PTHR19375">
    <property type="entry name" value="HEAT SHOCK PROTEIN 70KDA"/>
    <property type="match status" value="1"/>
</dbReference>
<dbReference type="Pfam" id="PF00012">
    <property type="entry name" value="HSP70"/>
    <property type="match status" value="1"/>
</dbReference>
<dbReference type="PRINTS" id="PR00301">
    <property type="entry name" value="HEATSHOCK70"/>
</dbReference>
<dbReference type="SUPFAM" id="SSF53067">
    <property type="entry name" value="Actin-like ATPase domain"/>
    <property type="match status" value="2"/>
</dbReference>
<dbReference type="SUPFAM" id="SSF100934">
    <property type="entry name" value="Heat shock protein 70kD (HSP70), C-terminal subdomain"/>
    <property type="match status" value="1"/>
</dbReference>
<dbReference type="SUPFAM" id="SSF100920">
    <property type="entry name" value="Heat shock protein 70kD (HSP70), peptide-binding domain"/>
    <property type="match status" value="1"/>
</dbReference>
<dbReference type="PROSITE" id="PS00297">
    <property type="entry name" value="HSP70_1"/>
    <property type="match status" value="1"/>
</dbReference>
<dbReference type="PROSITE" id="PS00329">
    <property type="entry name" value="HSP70_2"/>
    <property type="match status" value="1"/>
</dbReference>
<dbReference type="PROSITE" id="PS01036">
    <property type="entry name" value="HSP70_3"/>
    <property type="match status" value="1"/>
</dbReference>
<gene>
    <name evidence="1" type="primary">dnaK</name>
    <name type="ordered locus">Acid_7484</name>
</gene>
<feature type="chain" id="PRO_1000059673" description="Chaperone protein DnaK">
    <location>
        <begin position="1"/>
        <end position="636"/>
    </location>
</feature>
<feature type="region of interest" description="Disordered" evidence="2">
    <location>
        <begin position="591"/>
        <end position="636"/>
    </location>
</feature>
<feature type="compositionally biased region" description="Basic and acidic residues" evidence="2">
    <location>
        <begin position="614"/>
        <end position="624"/>
    </location>
</feature>
<feature type="modified residue" description="Phosphothreonine; by autocatalysis" evidence="1">
    <location>
        <position position="196"/>
    </location>
</feature>
<organism>
    <name type="scientific">Solibacter usitatus (strain Ellin6076)</name>
    <dbReference type="NCBI Taxonomy" id="234267"/>
    <lineage>
        <taxon>Bacteria</taxon>
        <taxon>Pseudomonadati</taxon>
        <taxon>Acidobacteriota</taxon>
        <taxon>Terriglobia</taxon>
        <taxon>Bryobacterales</taxon>
        <taxon>Solibacteraceae</taxon>
        <taxon>Candidatus Solibacter</taxon>
    </lineage>
</organism>
<comment type="function">
    <text evidence="1">Acts as a chaperone.</text>
</comment>
<comment type="induction">
    <text evidence="1">By stress conditions e.g. heat shock.</text>
</comment>
<comment type="similarity">
    <text evidence="1">Belongs to the heat shock protein 70 family.</text>
</comment>
<evidence type="ECO:0000255" key="1">
    <source>
        <dbReference type="HAMAP-Rule" id="MF_00332"/>
    </source>
</evidence>
<evidence type="ECO:0000256" key="2">
    <source>
        <dbReference type="SAM" id="MobiDB-lite"/>
    </source>
</evidence>
<protein>
    <recommendedName>
        <fullName evidence="1">Chaperone protein DnaK</fullName>
    </recommendedName>
    <alternativeName>
        <fullName evidence="1">HSP70</fullName>
    </alternativeName>
    <alternativeName>
        <fullName evidence="1">Heat shock 70 kDa protein</fullName>
    </alternativeName>
    <alternativeName>
        <fullName evidence="1">Heat shock protein 70</fullName>
    </alternativeName>
</protein>
<proteinExistence type="inferred from homology"/>
<sequence>MGKIIGIDLGTTNSCVAVMEGGQPTVIANQEGNRTTPSVVAFTKSGERLVGQVAKRQAITNPENTVFSIKRFMGRRYDEVNEEMKMVPYKVVRGENGDARVDIMGKKYSPPEISAMILTKLKEAAESYLGEKVTQAVITVPAYFNDAQRQATKDAGKIAGLDVLRIINEPTAAALAYGLDKKKNETIAVYDFGGGTFDISVLEVGEGVVEVKSTNGDTHLGGDNIDQRVIDWIVSEFKKENGIDLSKDQMALQRLKEAAEKAKMELSTLLETEINLPFITADATGPKHLQMRLSRSRFEQMVEDILQRSMGPCKQAMTDASVTPSQIDEVVLVGGQTRMPRIQTLVRELFQRDPHQGVNPDEVVAIGAAVQGGVLGGEVKDVLLLDVTPLSLGIETMGGVFTKLIERNTTIPTRKSEVFSTASDNQPSVEIKVYQGERAMARDNRLLGVFQLGNIPPAPRGVPQIEVTFDIDANGILNVTAKDRGTNNEQKITITSSSGLSKDEVEKMARDAEANAADDRKLKDTIDARNRADAMVYNVEKTLKEHRAKVGEAEAKEIEAALEETKKTLNENDAEKINAAVDRLTTASHKLAEAMYKSSSQPGAQEAPPTDGQPKPDEKGKDNVVDAEFVDVDDKK</sequence>
<name>DNAK_SOLUE</name>
<accession>Q01PM8</accession>
<keyword id="KW-0067">ATP-binding</keyword>
<keyword id="KW-0143">Chaperone</keyword>
<keyword id="KW-0547">Nucleotide-binding</keyword>
<keyword id="KW-0597">Phosphoprotein</keyword>
<keyword id="KW-0346">Stress response</keyword>